<gene>
    <name evidence="1" type="primary">recR</name>
    <name type="ordered locus">HPSH_04875</name>
</gene>
<organism>
    <name type="scientific">Helicobacter pylori (strain Shi470)</name>
    <dbReference type="NCBI Taxonomy" id="512562"/>
    <lineage>
        <taxon>Bacteria</taxon>
        <taxon>Pseudomonadati</taxon>
        <taxon>Campylobacterota</taxon>
        <taxon>Epsilonproteobacteria</taxon>
        <taxon>Campylobacterales</taxon>
        <taxon>Helicobacteraceae</taxon>
        <taxon>Helicobacter</taxon>
    </lineage>
</organism>
<accession>B2UU73</accession>
<feature type="chain" id="PRO_1000089736" description="Recombination protein RecR">
    <location>
        <begin position="1"/>
        <end position="193"/>
    </location>
</feature>
<feature type="domain" description="Toprim" evidence="1">
    <location>
        <begin position="84"/>
        <end position="170"/>
    </location>
</feature>
<feature type="zinc finger region" description="C4-type" evidence="1">
    <location>
        <begin position="61"/>
        <end position="76"/>
    </location>
</feature>
<name>RECR_HELPS</name>
<keyword id="KW-0227">DNA damage</keyword>
<keyword id="KW-0233">DNA recombination</keyword>
<keyword id="KW-0234">DNA repair</keyword>
<keyword id="KW-0479">Metal-binding</keyword>
<keyword id="KW-0862">Zinc</keyword>
<keyword id="KW-0863">Zinc-finger</keyword>
<reference key="1">
    <citation type="submission" date="2008-05" db="EMBL/GenBank/DDBJ databases">
        <title>Genome sequence of Helicobacter pylori from the remote Amazon: traces of Asian ancestry of the first Americans.</title>
        <authorList>
            <person name="Kersulyte D."/>
            <person name="Kalia A."/>
            <person name="Gilman R.H."/>
            <person name="Berg D.E."/>
        </authorList>
    </citation>
    <scope>NUCLEOTIDE SEQUENCE [LARGE SCALE GENOMIC DNA]</scope>
    <source>
        <strain>Shi470</strain>
    </source>
</reference>
<sequence>MNTYKNSLNHFLNLVDCLEKIPNVGKKSAFKMAYHLGLENPYLALKITHALENALENLKRCASCNALSESEICEICSDESRQNSQLCMVLHPRDVFILEDLKDFLGRYYVLNSIEEVDFNALEKRLIEENIKEIIFAFPPTLANDSLMLYIEDKLQHFHLTFTKIAQGVPTGVNFENIDSVSLSRAFNSRIKA</sequence>
<dbReference type="EMBL" id="CP001072">
    <property type="protein sequence ID" value="ACD48405.1"/>
    <property type="molecule type" value="Genomic_DNA"/>
</dbReference>
<dbReference type="RefSeq" id="WP_001099588.1">
    <property type="nucleotide sequence ID" value="NC_010698.2"/>
</dbReference>
<dbReference type="SMR" id="B2UU73"/>
<dbReference type="KEGG" id="hps:HPSH_04875"/>
<dbReference type="HOGENOM" id="CLU_060739_1_1_7"/>
<dbReference type="GO" id="GO:0003677">
    <property type="term" value="F:DNA binding"/>
    <property type="evidence" value="ECO:0007669"/>
    <property type="project" value="UniProtKB-UniRule"/>
</dbReference>
<dbReference type="GO" id="GO:0008270">
    <property type="term" value="F:zinc ion binding"/>
    <property type="evidence" value="ECO:0007669"/>
    <property type="project" value="UniProtKB-KW"/>
</dbReference>
<dbReference type="GO" id="GO:0006310">
    <property type="term" value="P:DNA recombination"/>
    <property type="evidence" value="ECO:0007669"/>
    <property type="project" value="UniProtKB-UniRule"/>
</dbReference>
<dbReference type="GO" id="GO:0006281">
    <property type="term" value="P:DNA repair"/>
    <property type="evidence" value="ECO:0007669"/>
    <property type="project" value="UniProtKB-UniRule"/>
</dbReference>
<dbReference type="CDD" id="cd01025">
    <property type="entry name" value="TOPRIM_recR"/>
    <property type="match status" value="1"/>
</dbReference>
<dbReference type="Gene3D" id="3.40.1360.10">
    <property type="match status" value="1"/>
</dbReference>
<dbReference type="Gene3D" id="1.10.8.420">
    <property type="entry name" value="RecR Domain 1"/>
    <property type="match status" value="1"/>
</dbReference>
<dbReference type="HAMAP" id="MF_00017">
    <property type="entry name" value="RecR"/>
    <property type="match status" value="1"/>
</dbReference>
<dbReference type="InterPro" id="IPR000093">
    <property type="entry name" value="DNA_Rcmb_RecR"/>
</dbReference>
<dbReference type="InterPro" id="IPR023627">
    <property type="entry name" value="Rcmb_RecR"/>
</dbReference>
<dbReference type="InterPro" id="IPR015967">
    <property type="entry name" value="Rcmb_RecR_Znf"/>
</dbReference>
<dbReference type="InterPro" id="IPR006171">
    <property type="entry name" value="TOPRIM_dom"/>
</dbReference>
<dbReference type="InterPro" id="IPR034137">
    <property type="entry name" value="TOPRIM_RecR"/>
</dbReference>
<dbReference type="NCBIfam" id="TIGR00615">
    <property type="entry name" value="recR"/>
    <property type="match status" value="1"/>
</dbReference>
<dbReference type="PANTHER" id="PTHR30446">
    <property type="entry name" value="RECOMBINATION PROTEIN RECR"/>
    <property type="match status" value="1"/>
</dbReference>
<dbReference type="PANTHER" id="PTHR30446:SF0">
    <property type="entry name" value="RECOMBINATION PROTEIN RECR"/>
    <property type="match status" value="1"/>
</dbReference>
<dbReference type="Pfam" id="PF21176">
    <property type="entry name" value="RecR_HhH"/>
    <property type="match status" value="1"/>
</dbReference>
<dbReference type="Pfam" id="PF02132">
    <property type="entry name" value="RecR_ZnF"/>
    <property type="match status" value="1"/>
</dbReference>
<dbReference type="SUPFAM" id="SSF111304">
    <property type="entry name" value="Recombination protein RecR"/>
    <property type="match status" value="1"/>
</dbReference>
<dbReference type="PROSITE" id="PS01300">
    <property type="entry name" value="RECR"/>
    <property type="match status" value="1"/>
</dbReference>
<dbReference type="PROSITE" id="PS50880">
    <property type="entry name" value="TOPRIM"/>
    <property type="match status" value="1"/>
</dbReference>
<evidence type="ECO:0000255" key="1">
    <source>
        <dbReference type="HAMAP-Rule" id="MF_00017"/>
    </source>
</evidence>
<comment type="function">
    <text evidence="1">May play a role in DNA repair. It seems to be involved in an RecBC-independent recombinational process of DNA repair. It may act with RecF and RecO.</text>
</comment>
<comment type="similarity">
    <text evidence="1">Belongs to the RecR family.</text>
</comment>
<protein>
    <recommendedName>
        <fullName evidence="1">Recombination protein RecR</fullName>
    </recommendedName>
</protein>
<proteinExistence type="inferred from homology"/>